<comment type="function">
    <text evidence="1">Catalyzes the conversion of 1-hydroxy-2-methyl-2-(E)-butenyl 4-diphosphate (HMBPP) into a mixture of isopentenyl diphosphate (IPP) and dimethylallyl diphosphate (DMAPP). Acts in the terminal step of the DOXP/MEP pathway for isoprenoid precursor biosynthesis.</text>
</comment>
<comment type="catalytic activity">
    <reaction evidence="1">
        <text>isopentenyl diphosphate + 2 oxidized [2Fe-2S]-[ferredoxin] + H2O = (2E)-4-hydroxy-3-methylbut-2-enyl diphosphate + 2 reduced [2Fe-2S]-[ferredoxin] + 2 H(+)</text>
        <dbReference type="Rhea" id="RHEA:24488"/>
        <dbReference type="Rhea" id="RHEA-COMP:10000"/>
        <dbReference type="Rhea" id="RHEA-COMP:10001"/>
        <dbReference type="ChEBI" id="CHEBI:15377"/>
        <dbReference type="ChEBI" id="CHEBI:15378"/>
        <dbReference type="ChEBI" id="CHEBI:33737"/>
        <dbReference type="ChEBI" id="CHEBI:33738"/>
        <dbReference type="ChEBI" id="CHEBI:128753"/>
        <dbReference type="ChEBI" id="CHEBI:128769"/>
        <dbReference type="EC" id="1.17.7.4"/>
    </reaction>
</comment>
<comment type="catalytic activity">
    <reaction evidence="1">
        <text>dimethylallyl diphosphate + 2 oxidized [2Fe-2S]-[ferredoxin] + H2O = (2E)-4-hydroxy-3-methylbut-2-enyl diphosphate + 2 reduced [2Fe-2S]-[ferredoxin] + 2 H(+)</text>
        <dbReference type="Rhea" id="RHEA:24825"/>
        <dbReference type="Rhea" id="RHEA-COMP:10000"/>
        <dbReference type="Rhea" id="RHEA-COMP:10001"/>
        <dbReference type="ChEBI" id="CHEBI:15377"/>
        <dbReference type="ChEBI" id="CHEBI:15378"/>
        <dbReference type="ChEBI" id="CHEBI:33737"/>
        <dbReference type="ChEBI" id="CHEBI:33738"/>
        <dbReference type="ChEBI" id="CHEBI:57623"/>
        <dbReference type="ChEBI" id="CHEBI:128753"/>
        <dbReference type="EC" id="1.17.7.4"/>
    </reaction>
</comment>
<comment type="cofactor">
    <cofactor evidence="1">
        <name>[4Fe-4S] cluster</name>
        <dbReference type="ChEBI" id="CHEBI:49883"/>
    </cofactor>
    <text evidence="1">Binds 1 [4Fe-4S] cluster per subunit.</text>
</comment>
<comment type="pathway">
    <text evidence="1">Isoprenoid biosynthesis; dimethylallyl diphosphate biosynthesis; dimethylallyl diphosphate from (2E)-4-hydroxy-3-methylbutenyl diphosphate: step 1/1.</text>
</comment>
<comment type="pathway">
    <text evidence="1">Isoprenoid biosynthesis; isopentenyl diphosphate biosynthesis via DXP pathway; isopentenyl diphosphate from 1-deoxy-D-xylulose 5-phosphate: step 6/6.</text>
</comment>
<comment type="subunit">
    <text evidence="1">Homodimer.</text>
</comment>
<comment type="similarity">
    <text evidence="1">Belongs to the IspH family.</text>
</comment>
<protein>
    <recommendedName>
        <fullName evidence="1">4-hydroxy-3-methylbut-2-enyl diphosphate reductase</fullName>
        <shortName evidence="1">HMBPP reductase</shortName>
        <ecNumber evidence="1">1.17.7.4</ecNumber>
    </recommendedName>
</protein>
<accession>Q0T8G5</accession>
<sequence>MQILLANPRGFCAGVDRAISIVENALAIYGAPIYVRHEVVHNRYVVDSLRERGAIFIEQISEVPDGAILIFSAHGVSQAVRNEAKSRDLTVFDATCPLVTKVHMEVARASRRGEESILIGHAGHPEVEGTMGQYSNPEGGMYLVESPDDVWKLTVKNEEKLSFMTQTTLSVDDTSDVIDALRKRFPKIVGPRKDDICYATTNRQEAVRALAEQAEVVLVVGSKNSSNSNRLAELAQRMGKHAFLIDDAKDIQEEWVKEVKCVGVTAGASAPDILVQNVVARLQQLGGGEAIPLEGREENIVFEVPKELRVDIREVD</sequence>
<name>ISPH_SHIF8</name>
<reference key="1">
    <citation type="journal article" date="2006" name="BMC Genomics">
        <title>Complete genome sequence of Shigella flexneri 5b and comparison with Shigella flexneri 2a.</title>
        <authorList>
            <person name="Nie H."/>
            <person name="Yang F."/>
            <person name="Zhang X."/>
            <person name="Yang J."/>
            <person name="Chen L."/>
            <person name="Wang J."/>
            <person name="Xiong Z."/>
            <person name="Peng J."/>
            <person name="Sun L."/>
            <person name="Dong J."/>
            <person name="Xue Y."/>
            <person name="Xu X."/>
            <person name="Chen S."/>
            <person name="Yao Z."/>
            <person name="Shen Y."/>
            <person name="Jin Q."/>
        </authorList>
    </citation>
    <scope>NUCLEOTIDE SEQUENCE [LARGE SCALE GENOMIC DNA]</scope>
    <source>
        <strain>8401</strain>
    </source>
</reference>
<evidence type="ECO:0000255" key="1">
    <source>
        <dbReference type="HAMAP-Rule" id="MF_00191"/>
    </source>
</evidence>
<gene>
    <name evidence="1" type="primary">ispH</name>
    <name type="ordered locus">SFV_0023</name>
</gene>
<proteinExistence type="inferred from homology"/>
<keyword id="KW-0004">4Fe-4S</keyword>
<keyword id="KW-0408">Iron</keyword>
<keyword id="KW-0411">Iron-sulfur</keyword>
<keyword id="KW-0414">Isoprene biosynthesis</keyword>
<keyword id="KW-0479">Metal-binding</keyword>
<keyword id="KW-0560">Oxidoreductase</keyword>
<organism>
    <name type="scientific">Shigella flexneri serotype 5b (strain 8401)</name>
    <dbReference type="NCBI Taxonomy" id="373384"/>
    <lineage>
        <taxon>Bacteria</taxon>
        <taxon>Pseudomonadati</taxon>
        <taxon>Pseudomonadota</taxon>
        <taxon>Gammaproteobacteria</taxon>
        <taxon>Enterobacterales</taxon>
        <taxon>Enterobacteriaceae</taxon>
        <taxon>Shigella</taxon>
    </lineage>
</organism>
<feature type="chain" id="PRO_1000021179" description="4-hydroxy-3-methylbut-2-enyl diphosphate reductase">
    <location>
        <begin position="1"/>
        <end position="316"/>
    </location>
</feature>
<feature type="active site" description="Proton donor" evidence="1">
    <location>
        <position position="126"/>
    </location>
</feature>
<feature type="binding site" evidence="1">
    <location>
        <position position="12"/>
    </location>
    <ligand>
        <name>[4Fe-4S] cluster</name>
        <dbReference type="ChEBI" id="CHEBI:49883"/>
    </ligand>
</feature>
<feature type="binding site" evidence="1">
    <location>
        <position position="41"/>
    </location>
    <ligand>
        <name>(2E)-4-hydroxy-3-methylbut-2-enyl diphosphate</name>
        <dbReference type="ChEBI" id="CHEBI:128753"/>
    </ligand>
</feature>
<feature type="binding site" evidence="1">
    <location>
        <position position="41"/>
    </location>
    <ligand>
        <name>dimethylallyl diphosphate</name>
        <dbReference type="ChEBI" id="CHEBI:57623"/>
    </ligand>
</feature>
<feature type="binding site" evidence="1">
    <location>
        <position position="41"/>
    </location>
    <ligand>
        <name>isopentenyl diphosphate</name>
        <dbReference type="ChEBI" id="CHEBI:128769"/>
    </ligand>
</feature>
<feature type="binding site" evidence="1">
    <location>
        <position position="74"/>
    </location>
    <ligand>
        <name>(2E)-4-hydroxy-3-methylbut-2-enyl diphosphate</name>
        <dbReference type="ChEBI" id="CHEBI:128753"/>
    </ligand>
</feature>
<feature type="binding site" evidence="1">
    <location>
        <position position="74"/>
    </location>
    <ligand>
        <name>dimethylallyl diphosphate</name>
        <dbReference type="ChEBI" id="CHEBI:57623"/>
    </ligand>
</feature>
<feature type="binding site" evidence="1">
    <location>
        <position position="74"/>
    </location>
    <ligand>
        <name>isopentenyl diphosphate</name>
        <dbReference type="ChEBI" id="CHEBI:128769"/>
    </ligand>
</feature>
<feature type="binding site" evidence="1">
    <location>
        <position position="96"/>
    </location>
    <ligand>
        <name>[4Fe-4S] cluster</name>
        <dbReference type="ChEBI" id="CHEBI:49883"/>
    </ligand>
</feature>
<feature type="binding site" evidence="1">
    <location>
        <position position="124"/>
    </location>
    <ligand>
        <name>(2E)-4-hydroxy-3-methylbut-2-enyl diphosphate</name>
        <dbReference type="ChEBI" id="CHEBI:128753"/>
    </ligand>
</feature>
<feature type="binding site" evidence="1">
    <location>
        <position position="124"/>
    </location>
    <ligand>
        <name>dimethylallyl diphosphate</name>
        <dbReference type="ChEBI" id="CHEBI:57623"/>
    </ligand>
</feature>
<feature type="binding site" evidence="1">
    <location>
        <position position="124"/>
    </location>
    <ligand>
        <name>isopentenyl diphosphate</name>
        <dbReference type="ChEBI" id="CHEBI:128769"/>
    </ligand>
</feature>
<feature type="binding site" evidence="1">
    <location>
        <position position="167"/>
    </location>
    <ligand>
        <name>(2E)-4-hydroxy-3-methylbut-2-enyl diphosphate</name>
        <dbReference type="ChEBI" id="CHEBI:128753"/>
    </ligand>
</feature>
<feature type="binding site" evidence="1">
    <location>
        <position position="197"/>
    </location>
    <ligand>
        <name>[4Fe-4S] cluster</name>
        <dbReference type="ChEBI" id="CHEBI:49883"/>
    </ligand>
</feature>
<feature type="binding site" evidence="1">
    <location>
        <position position="225"/>
    </location>
    <ligand>
        <name>(2E)-4-hydroxy-3-methylbut-2-enyl diphosphate</name>
        <dbReference type="ChEBI" id="CHEBI:128753"/>
    </ligand>
</feature>
<feature type="binding site" evidence="1">
    <location>
        <position position="225"/>
    </location>
    <ligand>
        <name>dimethylallyl diphosphate</name>
        <dbReference type="ChEBI" id="CHEBI:57623"/>
    </ligand>
</feature>
<feature type="binding site" evidence="1">
    <location>
        <position position="225"/>
    </location>
    <ligand>
        <name>isopentenyl diphosphate</name>
        <dbReference type="ChEBI" id="CHEBI:128769"/>
    </ligand>
</feature>
<feature type="binding site" evidence="1">
    <location>
        <position position="226"/>
    </location>
    <ligand>
        <name>(2E)-4-hydroxy-3-methylbut-2-enyl diphosphate</name>
        <dbReference type="ChEBI" id="CHEBI:128753"/>
    </ligand>
</feature>
<feature type="binding site" evidence="1">
    <location>
        <position position="226"/>
    </location>
    <ligand>
        <name>dimethylallyl diphosphate</name>
        <dbReference type="ChEBI" id="CHEBI:57623"/>
    </ligand>
</feature>
<feature type="binding site" evidence="1">
    <location>
        <position position="226"/>
    </location>
    <ligand>
        <name>isopentenyl diphosphate</name>
        <dbReference type="ChEBI" id="CHEBI:128769"/>
    </ligand>
</feature>
<feature type="binding site" evidence="1">
    <location>
        <position position="227"/>
    </location>
    <ligand>
        <name>(2E)-4-hydroxy-3-methylbut-2-enyl diphosphate</name>
        <dbReference type="ChEBI" id="CHEBI:128753"/>
    </ligand>
</feature>
<feature type="binding site" evidence="1">
    <location>
        <position position="227"/>
    </location>
    <ligand>
        <name>dimethylallyl diphosphate</name>
        <dbReference type="ChEBI" id="CHEBI:57623"/>
    </ligand>
</feature>
<feature type="binding site" evidence="1">
    <location>
        <position position="227"/>
    </location>
    <ligand>
        <name>isopentenyl diphosphate</name>
        <dbReference type="ChEBI" id="CHEBI:128769"/>
    </ligand>
</feature>
<feature type="binding site" evidence="1">
    <location>
        <position position="269"/>
    </location>
    <ligand>
        <name>(2E)-4-hydroxy-3-methylbut-2-enyl diphosphate</name>
        <dbReference type="ChEBI" id="CHEBI:128753"/>
    </ligand>
</feature>
<feature type="binding site" evidence="1">
    <location>
        <position position="269"/>
    </location>
    <ligand>
        <name>dimethylallyl diphosphate</name>
        <dbReference type="ChEBI" id="CHEBI:57623"/>
    </ligand>
</feature>
<feature type="binding site" evidence="1">
    <location>
        <position position="269"/>
    </location>
    <ligand>
        <name>isopentenyl diphosphate</name>
        <dbReference type="ChEBI" id="CHEBI:128769"/>
    </ligand>
</feature>
<dbReference type="EC" id="1.17.7.4" evidence="1"/>
<dbReference type="EMBL" id="CP000266">
    <property type="protein sequence ID" value="ABF02311.1"/>
    <property type="molecule type" value="Genomic_DNA"/>
</dbReference>
<dbReference type="RefSeq" id="WP_001166389.1">
    <property type="nucleotide sequence ID" value="NC_008258.1"/>
</dbReference>
<dbReference type="SMR" id="Q0T8G5"/>
<dbReference type="KEGG" id="sfv:SFV_0023"/>
<dbReference type="HOGENOM" id="CLU_027486_1_0_6"/>
<dbReference type="UniPathway" id="UPA00056">
    <property type="reaction ID" value="UER00097"/>
</dbReference>
<dbReference type="UniPathway" id="UPA00059">
    <property type="reaction ID" value="UER00105"/>
</dbReference>
<dbReference type="Proteomes" id="UP000000659">
    <property type="component" value="Chromosome"/>
</dbReference>
<dbReference type="GO" id="GO:0051539">
    <property type="term" value="F:4 iron, 4 sulfur cluster binding"/>
    <property type="evidence" value="ECO:0007669"/>
    <property type="project" value="UniProtKB-UniRule"/>
</dbReference>
<dbReference type="GO" id="GO:0051745">
    <property type="term" value="F:4-hydroxy-3-methylbut-2-enyl diphosphate reductase activity"/>
    <property type="evidence" value="ECO:0007669"/>
    <property type="project" value="UniProtKB-UniRule"/>
</dbReference>
<dbReference type="GO" id="GO:0046872">
    <property type="term" value="F:metal ion binding"/>
    <property type="evidence" value="ECO:0007669"/>
    <property type="project" value="UniProtKB-KW"/>
</dbReference>
<dbReference type="GO" id="GO:0050992">
    <property type="term" value="P:dimethylallyl diphosphate biosynthetic process"/>
    <property type="evidence" value="ECO:0007669"/>
    <property type="project" value="UniProtKB-UniRule"/>
</dbReference>
<dbReference type="GO" id="GO:0019288">
    <property type="term" value="P:isopentenyl diphosphate biosynthetic process, methylerythritol 4-phosphate pathway"/>
    <property type="evidence" value="ECO:0007669"/>
    <property type="project" value="UniProtKB-UniRule"/>
</dbReference>
<dbReference type="GO" id="GO:0016114">
    <property type="term" value="P:terpenoid biosynthetic process"/>
    <property type="evidence" value="ECO:0007669"/>
    <property type="project" value="UniProtKB-UniRule"/>
</dbReference>
<dbReference type="CDD" id="cd13944">
    <property type="entry name" value="lytB_ispH"/>
    <property type="match status" value="1"/>
</dbReference>
<dbReference type="FunFam" id="3.40.1010.20:FF:000001">
    <property type="entry name" value="4-hydroxy-3-methylbut-2-enyl diphosphate reductase"/>
    <property type="match status" value="1"/>
</dbReference>
<dbReference type="FunFam" id="3.40.50.11270:FF:000001">
    <property type="entry name" value="4-hydroxy-3-methylbut-2-enyl diphosphate reductase"/>
    <property type="match status" value="1"/>
</dbReference>
<dbReference type="Gene3D" id="3.40.50.11270">
    <property type="match status" value="1"/>
</dbReference>
<dbReference type="Gene3D" id="3.40.1010.20">
    <property type="entry name" value="4-hydroxy-3-methylbut-2-enyl diphosphate reductase, catalytic domain"/>
    <property type="match status" value="2"/>
</dbReference>
<dbReference type="HAMAP" id="MF_00191">
    <property type="entry name" value="IspH"/>
    <property type="match status" value="1"/>
</dbReference>
<dbReference type="InterPro" id="IPR003451">
    <property type="entry name" value="LytB/IspH"/>
</dbReference>
<dbReference type="NCBIfam" id="TIGR00216">
    <property type="entry name" value="ispH_lytB"/>
    <property type="match status" value="1"/>
</dbReference>
<dbReference type="NCBIfam" id="NF002188">
    <property type="entry name" value="PRK01045.1-2"/>
    <property type="match status" value="1"/>
</dbReference>
<dbReference type="NCBIfam" id="NF002190">
    <property type="entry name" value="PRK01045.1-4"/>
    <property type="match status" value="1"/>
</dbReference>
<dbReference type="PANTHER" id="PTHR30426">
    <property type="entry name" value="4-HYDROXY-3-METHYLBUT-2-ENYL DIPHOSPHATE REDUCTASE"/>
    <property type="match status" value="1"/>
</dbReference>
<dbReference type="PANTHER" id="PTHR30426:SF0">
    <property type="entry name" value="4-HYDROXY-3-METHYLBUT-2-ENYL DIPHOSPHATE REDUCTASE"/>
    <property type="match status" value="1"/>
</dbReference>
<dbReference type="Pfam" id="PF02401">
    <property type="entry name" value="LYTB"/>
    <property type="match status" value="1"/>
</dbReference>